<accession>P0CJ15</accession>
<feature type="signal peptide" evidence="2">
    <location>
        <begin position="1"/>
        <end position="25"/>
    </location>
</feature>
<feature type="chain" id="PRO_0000403907" description="Venom protein 3.1">
    <location>
        <begin position="26"/>
        <end position="96"/>
    </location>
</feature>
<feature type="region of interest" description="Disordered" evidence="3">
    <location>
        <begin position="45"/>
        <end position="84"/>
    </location>
</feature>
<sequence length="96" mass="11333">MKFSLISVFLFAVFLSNENIFQAIADNRYLPTIFKNPVNAEQRSEAVMSSSLTNEEESRNWPHRATRNTLEKGQKRSPAARSEIEEMEEYDDRWMW</sequence>
<comment type="subcellular location">
    <subcellularLocation>
        <location evidence="1">Secreted</location>
    </subcellularLocation>
</comment>
<comment type="tissue specificity">
    <text evidence="4">Expressed by the venom gland.</text>
</comment>
<comment type="similarity">
    <text evidence="4">Belongs to the non-disulfide-bridged peptide (NDBP) superfamily.</text>
</comment>
<organism>
    <name type="scientific">Lychas mucronatus</name>
    <name type="common">Chinese swimming scorpion</name>
    <dbReference type="NCBI Taxonomy" id="172552"/>
    <lineage>
        <taxon>Eukaryota</taxon>
        <taxon>Metazoa</taxon>
        <taxon>Ecdysozoa</taxon>
        <taxon>Arthropoda</taxon>
        <taxon>Chelicerata</taxon>
        <taxon>Arachnida</taxon>
        <taxon>Scorpiones</taxon>
        <taxon>Buthida</taxon>
        <taxon>Buthoidea</taxon>
        <taxon>Buthidae</taxon>
        <taxon>Lychas</taxon>
    </lineage>
</organism>
<reference key="1">
    <citation type="journal article" date="2010" name="BMC Genomics">
        <title>Comparative venom gland transcriptome analysis of the scorpion Lychas mucronatus reveals intraspecific toxic gene diversity and new venomous components.</title>
        <authorList>
            <person name="Zhao R."/>
            <person name="Ma Y."/>
            <person name="He Y."/>
            <person name="Di Z."/>
            <person name="Wu Y.-L."/>
            <person name="Cao Z.-J."/>
            <person name="Li W.-X."/>
        </authorList>
    </citation>
    <scope>NUCLEOTIDE SEQUENCE [MRNA]</scope>
    <source>
        <strain>Yunnan</strain>
        <tissue>Venom gland</tissue>
    </source>
</reference>
<keyword id="KW-0964">Secreted</keyword>
<keyword id="KW-0732">Signal</keyword>
<evidence type="ECO:0000250" key="1"/>
<evidence type="ECO:0000255" key="2"/>
<evidence type="ECO:0000256" key="3">
    <source>
        <dbReference type="SAM" id="MobiDB-lite"/>
    </source>
</evidence>
<evidence type="ECO:0000305" key="4"/>
<proteinExistence type="inferred from homology"/>
<name>NDBK_LYCMC</name>
<protein>
    <recommendedName>
        <fullName>Venom protein 3.1</fullName>
    </recommendedName>
</protein>
<dbReference type="EMBL" id="GT028580">
    <property type="status" value="NOT_ANNOTATED_CDS"/>
    <property type="molecule type" value="mRNA"/>
</dbReference>
<dbReference type="GO" id="GO:0005576">
    <property type="term" value="C:extracellular region"/>
    <property type="evidence" value="ECO:0007669"/>
    <property type="project" value="UniProtKB-SubCell"/>
</dbReference>